<name>NANR_ECO27</name>
<dbReference type="EMBL" id="FM180568">
    <property type="protein sequence ID" value="CAS11046.1"/>
    <property type="molecule type" value="Genomic_DNA"/>
</dbReference>
<dbReference type="RefSeq" id="WP_000074798.1">
    <property type="nucleotide sequence ID" value="NC_011601.1"/>
</dbReference>
<dbReference type="SMR" id="B7UJV9"/>
<dbReference type="KEGG" id="ecg:E2348C_3498"/>
<dbReference type="HOGENOM" id="CLU_017584_9_1_6"/>
<dbReference type="Proteomes" id="UP000008205">
    <property type="component" value="Chromosome"/>
</dbReference>
<dbReference type="GO" id="GO:0003677">
    <property type="term" value="F:DNA binding"/>
    <property type="evidence" value="ECO:0007669"/>
    <property type="project" value="UniProtKB-KW"/>
</dbReference>
<dbReference type="GO" id="GO:0003700">
    <property type="term" value="F:DNA-binding transcription factor activity"/>
    <property type="evidence" value="ECO:0007669"/>
    <property type="project" value="UniProtKB-UniRule"/>
</dbReference>
<dbReference type="GO" id="GO:0045892">
    <property type="term" value="P:negative regulation of DNA-templated transcription"/>
    <property type="evidence" value="ECO:0007669"/>
    <property type="project" value="UniProtKB-UniRule"/>
</dbReference>
<dbReference type="CDD" id="cd07377">
    <property type="entry name" value="WHTH_GntR"/>
    <property type="match status" value="1"/>
</dbReference>
<dbReference type="FunFam" id="1.10.10.10:FF:000150">
    <property type="entry name" value="HTH-type transcriptional repressor NanR"/>
    <property type="match status" value="1"/>
</dbReference>
<dbReference type="FunFam" id="1.20.120.530:FF:000006">
    <property type="entry name" value="HTH-type transcriptional repressor NanR"/>
    <property type="match status" value="1"/>
</dbReference>
<dbReference type="Gene3D" id="1.20.120.530">
    <property type="entry name" value="GntR ligand-binding domain-like"/>
    <property type="match status" value="1"/>
</dbReference>
<dbReference type="Gene3D" id="1.10.10.10">
    <property type="entry name" value="Winged helix-like DNA-binding domain superfamily/Winged helix DNA-binding domain"/>
    <property type="match status" value="1"/>
</dbReference>
<dbReference type="HAMAP" id="MF_01236">
    <property type="entry name" value="HTH_NanR"/>
    <property type="match status" value="1"/>
</dbReference>
<dbReference type="InterPro" id="IPR011711">
    <property type="entry name" value="GntR_C"/>
</dbReference>
<dbReference type="InterPro" id="IPR008920">
    <property type="entry name" value="TF_FadR/GntR_C"/>
</dbReference>
<dbReference type="InterPro" id="IPR000524">
    <property type="entry name" value="Tscrpt_reg_HTH_GntR"/>
</dbReference>
<dbReference type="InterPro" id="IPR023730">
    <property type="entry name" value="Tscrpt_reg_NanR"/>
</dbReference>
<dbReference type="InterPro" id="IPR036388">
    <property type="entry name" value="WH-like_DNA-bd_sf"/>
</dbReference>
<dbReference type="InterPro" id="IPR036390">
    <property type="entry name" value="WH_DNA-bd_sf"/>
</dbReference>
<dbReference type="NCBIfam" id="NF003011">
    <property type="entry name" value="PRK03837.1"/>
    <property type="match status" value="1"/>
</dbReference>
<dbReference type="PANTHER" id="PTHR43537:SF53">
    <property type="entry name" value="HTH-TYPE TRANSCRIPTIONAL REPRESSOR NANR"/>
    <property type="match status" value="1"/>
</dbReference>
<dbReference type="PANTHER" id="PTHR43537">
    <property type="entry name" value="TRANSCRIPTIONAL REGULATOR, GNTR FAMILY"/>
    <property type="match status" value="1"/>
</dbReference>
<dbReference type="Pfam" id="PF07729">
    <property type="entry name" value="FCD"/>
    <property type="match status" value="1"/>
</dbReference>
<dbReference type="Pfam" id="PF00392">
    <property type="entry name" value="GntR"/>
    <property type="match status" value="1"/>
</dbReference>
<dbReference type="PRINTS" id="PR00035">
    <property type="entry name" value="HTHGNTR"/>
</dbReference>
<dbReference type="SMART" id="SM00895">
    <property type="entry name" value="FCD"/>
    <property type="match status" value="1"/>
</dbReference>
<dbReference type="SMART" id="SM00345">
    <property type="entry name" value="HTH_GNTR"/>
    <property type="match status" value="1"/>
</dbReference>
<dbReference type="SUPFAM" id="SSF48008">
    <property type="entry name" value="GntR ligand-binding domain-like"/>
    <property type="match status" value="1"/>
</dbReference>
<dbReference type="SUPFAM" id="SSF46785">
    <property type="entry name" value="Winged helix' DNA-binding domain"/>
    <property type="match status" value="1"/>
</dbReference>
<dbReference type="PROSITE" id="PS50949">
    <property type="entry name" value="HTH_GNTR"/>
    <property type="match status" value="1"/>
</dbReference>
<sequence>MSPMNAFDSQTEDSSPAIGRNLRSRPLARKKLSEMVEEELEQMIRRREFGEGEQLPSERELMAFFNVGRPSVREALAALKRKGLVQINNGERARVSRPSADTIIGELSGMAKDFLSHPGGIAHFEQLRLFFESSLVRYAAEHATNEQIDLLAKALEINSQSLDNNAAFIRSDVDFHRVLAEIPGNPIFMAIHVALLDWLIAARPTVADQALHEHNNVSYQQHIAIVDAIRRHDPDEADRALQSHLNSVSATWHAFGQTTNKKK</sequence>
<accession>B7UJV9</accession>
<keyword id="KW-0238">DNA-binding</keyword>
<keyword id="KW-1185">Reference proteome</keyword>
<keyword id="KW-0678">Repressor</keyword>
<keyword id="KW-0804">Transcription</keyword>
<keyword id="KW-0805">Transcription regulation</keyword>
<comment type="function">
    <text evidence="1">Transcriptional repressor that controls expression of the genes required for the catabolism of sialic acids.</text>
</comment>
<comment type="similarity">
    <text evidence="1">Belongs to the NanR family.</text>
</comment>
<proteinExistence type="inferred from homology"/>
<reference key="1">
    <citation type="journal article" date="2009" name="J. Bacteriol.">
        <title>Complete genome sequence and comparative genome analysis of enteropathogenic Escherichia coli O127:H6 strain E2348/69.</title>
        <authorList>
            <person name="Iguchi A."/>
            <person name="Thomson N.R."/>
            <person name="Ogura Y."/>
            <person name="Saunders D."/>
            <person name="Ooka T."/>
            <person name="Henderson I.R."/>
            <person name="Harris D."/>
            <person name="Asadulghani M."/>
            <person name="Kurokawa K."/>
            <person name="Dean P."/>
            <person name="Kenny B."/>
            <person name="Quail M.A."/>
            <person name="Thurston S."/>
            <person name="Dougan G."/>
            <person name="Hayashi T."/>
            <person name="Parkhill J."/>
            <person name="Frankel G."/>
        </authorList>
    </citation>
    <scope>NUCLEOTIDE SEQUENCE [LARGE SCALE GENOMIC DNA]</scope>
    <source>
        <strain>E2348/69 / EPEC</strain>
    </source>
</reference>
<organism>
    <name type="scientific">Escherichia coli O127:H6 (strain E2348/69 / EPEC)</name>
    <dbReference type="NCBI Taxonomy" id="574521"/>
    <lineage>
        <taxon>Bacteria</taxon>
        <taxon>Pseudomonadati</taxon>
        <taxon>Pseudomonadota</taxon>
        <taxon>Gammaproteobacteria</taxon>
        <taxon>Enterobacterales</taxon>
        <taxon>Enterobacteriaceae</taxon>
        <taxon>Escherichia</taxon>
    </lineage>
</organism>
<evidence type="ECO:0000255" key="1">
    <source>
        <dbReference type="HAMAP-Rule" id="MF_01236"/>
    </source>
</evidence>
<evidence type="ECO:0000256" key="2">
    <source>
        <dbReference type="SAM" id="MobiDB-lite"/>
    </source>
</evidence>
<protein>
    <recommendedName>
        <fullName evidence="1">HTH-type transcriptional repressor NanR</fullName>
    </recommendedName>
</protein>
<gene>
    <name evidence="1" type="primary">nanR</name>
    <name type="ordered locus">E2348C_3498</name>
</gene>
<feature type="chain" id="PRO_1000164999" description="HTH-type transcriptional repressor NanR">
    <location>
        <begin position="1"/>
        <end position="263"/>
    </location>
</feature>
<feature type="domain" description="HTH gntR-type" evidence="1">
    <location>
        <begin position="30"/>
        <end position="98"/>
    </location>
</feature>
<feature type="DNA-binding region" description="H-T-H motif" evidence="1">
    <location>
        <begin position="58"/>
        <end position="77"/>
    </location>
</feature>
<feature type="region of interest" description="Disordered" evidence="2">
    <location>
        <begin position="1"/>
        <end position="24"/>
    </location>
</feature>